<reference key="1">
    <citation type="journal article" date="2001" name="Nature">
        <title>Complete genome sequence of Salmonella enterica serovar Typhimurium LT2.</title>
        <authorList>
            <person name="McClelland M."/>
            <person name="Sanderson K.E."/>
            <person name="Spieth J."/>
            <person name="Clifton S.W."/>
            <person name="Latreille P."/>
            <person name="Courtney L."/>
            <person name="Porwollik S."/>
            <person name="Ali J."/>
            <person name="Dante M."/>
            <person name="Du F."/>
            <person name="Hou S."/>
            <person name="Layman D."/>
            <person name="Leonard S."/>
            <person name="Nguyen C."/>
            <person name="Scott K."/>
            <person name="Holmes A."/>
            <person name="Grewal N."/>
            <person name="Mulvaney E."/>
            <person name="Ryan E."/>
            <person name="Sun H."/>
            <person name="Florea L."/>
            <person name="Miller W."/>
            <person name="Stoneking T."/>
            <person name="Nhan M."/>
            <person name="Waterston R."/>
            <person name="Wilson R.K."/>
        </authorList>
    </citation>
    <scope>NUCLEOTIDE SEQUENCE [LARGE SCALE GENOMIC DNA]</scope>
    <source>
        <strain>LT2 / SGSC1412 / ATCC 700720</strain>
    </source>
</reference>
<keyword id="KW-1185">Reference proteome</keyword>
<name>YQGE_SALTY</name>
<accession>Q8ZM51</accession>
<dbReference type="EMBL" id="AE006468">
    <property type="protein sequence ID" value="AAL21971.1"/>
    <property type="molecule type" value="Genomic_DNA"/>
</dbReference>
<dbReference type="RefSeq" id="NP_462012.1">
    <property type="nucleotide sequence ID" value="NC_003197.2"/>
</dbReference>
<dbReference type="RefSeq" id="WP_001053171.1">
    <property type="nucleotide sequence ID" value="NC_003197.2"/>
</dbReference>
<dbReference type="SMR" id="Q8ZM51"/>
<dbReference type="STRING" id="99287.STM3096"/>
<dbReference type="PaxDb" id="99287-STM3096"/>
<dbReference type="GeneID" id="1254619"/>
<dbReference type="KEGG" id="stm:STM3096"/>
<dbReference type="PATRIC" id="fig|99287.12.peg.3281"/>
<dbReference type="HOGENOM" id="CLU_057596_1_0_6"/>
<dbReference type="OMA" id="GAWYVVE"/>
<dbReference type="PhylomeDB" id="Q8ZM51"/>
<dbReference type="BioCyc" id="SENT99287:STM3096-MONOMER"/>
<dbReference type="Proteomes" id="UP000001014">
    <property type="component" value="Chromosome"/>
</dbReference>
<dbReference type="GO" id="GO:0005829">
    <property type="term" value="C:cytosol"/>
    <property type="evidence" value="ECO:0000318"/>
    <property type="project" value="GO_Central"/>
</dbReference>
<dbReference type="FunFam" id="3.30.70.1300:FF:000001">
    <property type="entry name" value="UPF0301 protein YqgE"/>
    <property type="match status" value="1"/>
</dbReference>
<dbReference type="Gene3D" id="3.40.1740.10">
    <property type="entry name" value="VC0467-like"/>
    <property type="match status" value="1"/>
</dbReference>
<dbReference type="Gene3D" id="3.30.70.1300">
    <property type="entry name" value="VC0467-like domains"/>
    <property type="match status" value="1"/>
</dbReference>
<dbReference type="HAMAP" id="MF_00758">
    <property type="entry name" value="UPF0301"/>
    <property type="match status" value="1"/>
</dbReference>
<dbReference type="InterPro" id="IPR003774">
    <property type="entry name" value="AlgH-like"/>
</dbReference>
<dbReference type="NCBIfam" id="NF001266">
    <property type="entry name" value="PRK00228.1-1"/>
    <property type="match status" value="1"/>
</dbReference>
<dbReference type="PANTHER" id="PTHR30327">
    <property type="entry name" value="UNCHARACTERIZED PROTEIN YQGE"/>
    <property type="match status" value="1"/>
</dbReference>
<dbReference type="PANTHER" id="PTHR30327:SF1">
    <property type="entry name" value="UPF0301 PROTEIN YQGE"/>
    <property type="match status" value="1"/>
</dbReference>
<dbReference type="Pfam" id="PF02622">
    <property type="entry name" value="DUF179"/>
    <property type="match status" value="1"/>
</dbReference>
<dbReference type="SUPFAM" id="SSF143456">
    <property type="entry name" value="VC0467-like"/>
    <property type="match status" value="1"/>
</dbReference>
<sequence>MNLQHHFLIAMPALQDPIFRRSVVYICEHNQDGAMGIIVNKPLENLQIEGILEKLKITPEPRDSAIRLDKAVMLGGPLAEDRGFILHTPPSRFASSIRISDNTVITTSRDVLETLGTQQQPSDVLVALGYASWDKGQLEQELLDNAWLTAPADLNILFKTPIAERWREAAKLIGIDILTMPGVAGHA</sequence>
<protein>
    <recommendedName>
        <fullName evidence="1">UPF0301 protein YqgE</fullName>
    </recommendedName>
</protein>
<gene>
    <name evidence="1" type="primary">yqgE</name>
    <name type="ordered locus">STM3096</name>
</gene>
<organism>
    <name type="scientific">Salmonella typhimurium (strain LT2 / SGSC1412 / ATCC 700720)</name>
    <dbReference type="NCBI Taxonomy" id="99287"/>
    <lineage>
        <taxon>Bacteria</taxon>
        <taxon>Pseudomonadati</taxon>
        <taxon>Pseudomonadota</taxon>
        <taxon>Gammaproteobacteria</taxon>
        <taxon>Enterobacterales</taxon>
        <taxon>Enterobacteriaceae</taxon>
        <taxon>Salmonella</taxon>
    </lineage>
</organism>
<proteinExistence type="inferred from homology"/>
<feature type="chain" id="PRO_0000214345" description="UPF0301 protein YqgE">
    <location>
        <begin position="1"/>
        <end position="187"/>
    </location>
</feature>
<comment type="similarity">
    <text evidence="1">Belongs to the UPF0301 (AlgH) family.</text>
</comment>
<evidence type="ECO:0000255" key="1">
    <source>
        <dbReference type="HAMAP-Rule" id="MF_00758"/>
    </source>
</evidence>